<gene>
    <name type="primary">RPL4</name>
    <name type="ORF">QccE-11167</name>
</gene>
<accession>Q4R5P9</accession>
<sequence>MACARPLISVYSEKGESSGKNVTLPAVFKAPIRPDIVNFVHTNLRKNNRQPYAVSELAGHQTSAESWGTGRAVARIPRVRGGGTHRSGQGAFGNMCRGGRMFAPTKTWRRWHRRVNTTQKRYAICSALAASALPALVMSKGHSIEEVPELPLVVEDKVEGYKKTKEAVLLLKKLKAWNDIKKVYASQRMRAGKGKMRNRRRIQRRGPCIIYNEDNGIIKAFRNIPGITLLNVSKLNILKLAPGGHVGRFCIWTESAFRKLDELYGTWRKAASLKSNYNLPMHKMINTDLSRILKSPEIQRALRAPRKKIHRRVLKKNPLKNLRIMLKLNPYAKTMRWNTILRQARNHKLRVDKAAAAAAALEAKSDEKAAVAGKKPVVGKKGKKVAVGVKKQKKPLVGKKAAATKKPAPEKKSTEKKPTTEEKKPAA</sequence>
<comment type="function">
    <text evidence="1">Component of the large ribosomal subunit. The ribosome is a large ribonucleoprotein complex responsible for the synthesis of proteins in the cell.</text>
</comment>
<comment type="subunit">
    <text evidence="1 2">Component of the large ribosomal subunit. May bind IPO9 with low affinity (By similarity). Interacts with RBM3 (By similarity).</text>
</comment>
<comment type="subcellular location">
    <subcellularLocation>
        <location evidence="1">Cytoplasm</location>
    </subcellularLocation>
</comment>
<comment type="PTM">
    <text evidence="3">Citrullinated by PADI4.</text>
</comment>
<comment type="similarity">
    <text evidence="5">Belongs to the universal ribosomal protein uL4 family.</text>
</comment>
<organism>
    <name type="scientific">Macaca fascicularis</name>
    <name type="common">Crab-eating macaque</name>
    <name type="synonym">Cynomolgus monkey</name>
    <dbReference type="NCBI Taxonomy" id="9541"/>
    <lineage>
        <taxon>Eukaryota</taxon>
        <taxon>Metazoa</taxon>
        <taxon>Chordata</taxon>
        <taxon>Craniata</taxon>
        <taxon>Vertebrata</taxon>
        <taxon>Euteleostomi</taxon>
        <taxon>Mammalia</taxon>
        <taxon>Eutheria</taxon>
        <taxon>Euarchontoglires</taxon>
        <taxon>Primates</taxon>
        <taxon>Haplorrhini</taxon>
        <taxon>Catarrhini</taxon>
        <taxon>Cercopithecidae</taxon>
        <taxon>Cercopithecinae</taxon>
        <taxon>Macaca</taxon>
    </lineage>
</organism>
<dbReference type="EMBL" id="AB169494">
    <property type="protein sequence ID" value="BAE01576.1"/>
    <property type="molecule type" value="mRNA"/>
</dbReference>
<dbReference type="RefSeq" id="NP_001270314.1">
    <property type="nucleotide sequence ID" value="NM_001283385.1"/>
</dbReference>
<dbReference type="SMR" id="Q4R5P9"/>
<dbReference type="STRING" id="9541.ENSMFAP00000006333"/>
<dbReference type="eggNOG" id="KOG1475">
    <property type="taxonomic scope" value="Eukaryota"/>
</dbReference>
<dbReference type="Proteomes" id="UP000233100">
    <property type="component" value="Unplaced"/>
</dbReference>
<dbReference type="GO" id="GO:0005737">
    <property type="term" value="C:cytoplasm"/>
    <property type="evidence" value="ECO:0007669"/>
    <property type="project" value="UniProtKB-SubCell"/>
</dbReference>
<dbReference type="GO" id="GO:1990904">
    <property type="term" value="C:ribonucleoprotein complex"/>
    <property type="evidence" value="ECO:0007669"/>
    <property type="project" value="UniProtKB-KW"/>
</dbReference>
<dbReference type="GO" id="GO:0005840">
    <property type="term" value="C:ribosome"/>
    <property type="evidence" value="ECO:0007669"/>
    <property type="project" value="UniProtKB-KW"/>
</dbReference>
<dbReference type="GO" id="GO:0003735">
    <property type="term" value="F:structural constituent of ribosome"/>
    <property type="evidence" value="ECO:0007669"/>
    <property type="project" value="InterPro"/>
</dbReference>
<dbReference type="GO" id="GO:0006412">
    <property type="term" value="P:translation"/>
    <property type="evidence" value="ECO:0007669"/>
    <property type="project" value="InterPro"/>
</dbReference>
<dbReference type="FunFam" id="3.40.1370.10:FF:000002">
    <property type="entry name" value="60S ribosomal protein L4"/>
    <property type="match status" value="1"/>
</dbReference>
<dbReference type="Gene3D" id="3.40.1370.10">
    <property type="match status" value="1"/>
</dbReference>
<dbReference type="InterPro" id="IPR025755">
    <property type="entry name" value="Ribos_uL4_C_dom"/>
</dbReference>
<dbReference type="InterPro" id="IPR002136">
    <property type="entry name" value="Ribosomal_uL4"/>
</dbReference>
<dbReference type="InterPro" id="IPR023574">
    <property type="entry name" value="Ribosomal_uL4_dom_sf"/>
</dbReference>
<dbReference type="InterPro" id="IPR013000">
    <property type="entry name" value="Ribosomal_uL4_euk/arc_CS"/>
</dbReference>
<dbReference type="InterPro" id="IPR045240">
    <property type="entry name" value="Ribosomal_uL4_euk/arch"/>
</dbReference>
<dbReference type="PANTHER" id="PTHR19431">
    <property type="entry name" value="60S RIBOSOMAL PROTEIN L4"/>
    <property type="match status" value="1"/>
</dbReference>
<dbReference type="Pfam" id="PF14374">
    <property type="entry name" value="Ribos_L4_asso_C"/>
    <property type="match status" value="1"/>
</dbReference>
<dbReference type="Pfam" id="PF00573">
    <property type="entry name" value="Ribosomal_L4"/>
    <property type="match status" value="1"/>
</dbReference>
<dbReference type="SUPFAM" id="SSF52166">
    <property type="entry name" value="Ribosomal protein L4"/>
    <property type="match status" value="1"/>
</dbReference>
<dbReference type="PROSITE" id="PS00939">
    <property type="entry name" value="RIBOSOMAL_L1E"/>
    <property type="match status" value="1"/>
</dbReference>
<evidence type="ECO:0000250" key="1">
    <source>
        <dbReference type="UniProtKB" id="P36578"/>
    </source>
</evidence>
<evidence type="ECO:0000250" key="2">
    <source>
        <dbReference type="UniProtKB" id="P50878"/>
    </source>
</evidence>
<evidence type="ECO:0000250" key="3">
    <source>
        <dbReference type="UniProtKB" id="Q9D8E6"/>
    </source>
</evidence>
<evidence type="ECO:0000256" key="4">
    <source>
        <dbReference type="SAM" id="MobiDB-lite"/>
    </source>
</evidence>
<evidence type="ECO:0000305" key="5"/>
<reference key="1">
    <citation type="submission" date="2005-06" db="EMBL/GenBank/DDBJ databases">
        <title>DNA sequences of macaque genes expressed in brain or testis and its evolutionary implications.</title>
        <authorList>
            <consortium name="International consortium for macaque cDNA sequencing and analysis"/>
        </authorList>
    </citation>
    <scope>NUCLEOTIDE SEQUENCE [LARGE SCALE MRNA]</scope>
    <source>
        <tissue>Brain cortex</tissue>
    </source>
</reference>
<name>RL4_MACFA</name>
<proteinExistence type="evidence at transcript level"/>
<protein>
    <recommendedName>
        <fullName evidence="5">Large ribosomal subunit protein uL4</fullName>
    </recommendedName>
    <alternativeName>
        <fullName>60S ribosomal protein L4</fullName>
    </alternativeName>
</protein>
<feature type="initiator methionine" description="Removed" evidence="1">
    <location>
        <position position="1"/>
    </location>
</feature>
<feature type="chain" id="PRO_0000319316" description="Large ribosomal subunit protein uL4">
    <location>
        <begin position="2"/>
        <end position="427"/>
    </location>
</feature>
<feature type="region of interest" description="Disordered" evidence="4">
    <location>
        <begin position="369"/>
        <end position="427"/>
    </location>
</feature>
<feature type="compositionally biased region" description="Basic residues" evidence="4">
    <location>
        <begin position="377"/>
        <end position="397"/>
    </location>
</feature>
<feature type="compositionally biased region" description="Basic and acidic residues" evidence="4">
    <location>
        <begin position="407"/>
        <end position="427"/>
    </location>
</feature>
<feature type="modified residue" description="N-acetylalanine" evidence="1">
    <location>
        <position position="2"/>
    </location>
</feature>
<feature type="modified residue" description="N6-acetyllysine" evidence="1">
    <location>
        <position position="14"/>
    </location>
</feature>
<feature type="modified residue" description="Omega-N-methylarginine" evidence="3">
    <location>
        <position position="97"/>
    </location>
</feature>
<feature type="modified residue" description="N6-acetyllysine" evidence="1">
    <location>
        <position position="106"/>
    </location>
</feature>
<feature type="modified residue" description="N6-acetyllysine" evidence="3">
    <location>
        <position position="259"/>
    </location>
</feature>
<feature type="modified residue" description="Phosphothreonine" evidence="1">
    <location>
        <position position="266"/>
    </location>
</feature>
<feature type="modified residue" description="Phosphoserine" evidence="2">
    <location>
        <position position="290"/>
    </location>
</feature>
<feature type="modified residue" description="Phosphoserine" evidence="1">
    <location>
        <position position="295"/>
    </location>
</feature>
<feature type="modified residue" description="Citrulline" evidence="3">
    <location>
        <position position="300"/>
    </location>
</feature>
<feature type="modified residue" description="N6-acetyllysine" evidence="1">
    <location>
        <position position="333"/>
    </location>
</feature>
<feature type="modified residue" description="N6-acetyllysine" evidence="3">
    <location>
        <position position="353"/>
    </location>
</feature>
<feature type="modified residue" description="N6-acetyllysine; alternate" evidence="3">
    <location>
        <position position="364"/>
    </location>
</feature>
<feature type="modified residue" description="Phosphoserine" evidence="1">
    <location>
        <position position="365"/>
    </location>
</feature>
<feature type="cross-link" description="Glycyl lysine isopeptide (Lys-Gly) (interchain with G-Cter in SUMO2)" evidence="1">
    <location>
        <position position="239"/>
    </location>
</feature>
<feature type="cross-link" description="Glycyl lysine isopeptide (Lys-Gly) (interchain with G-Cter in SUMO2)" evidence="1">
    <location>
        <position position="327"/>
    </location>
</feature>
<feature type="cross-link" description="Glycyl lysine isopeptide (Lys-Gly) (interchain with G-Cter in SUMO1); alternate" evidence="1">
    <location>
        <position position="364"/>
    </location>
</feature>
<keyword id="KW-0007">Acetylation</keyword>
<keyword id="KW-0164">Citrullination</keyword>
<keyword id="KW-0963">Cytoplasm</keyword>
<keyword id="KW-1017">Isopeptide bond</keyword>
<keyword id="KW-0488">Methylation</keyword>
<keyword id="KW-0597">Phosphoprotein</keyword>
<keyword id="KW-1185">Reference proteome</keyword>
<keyword id="KW-0687">Ribonucleoprotein</keyword>
<keyword id="KW-0689">Ribosomal protein</keyword>
<keyword id="KW-0832">Ubl conjugation</keyword>